<evidence type="ECO:0000250" key="1"/>
<evidence type="ECO:0000255" key="2"/>
<evidence type="ECO:0000255" key="3">
    <source>
        <dbReference type="PROSITE-ProRule" id="PRU01096"/>
    </source>
</evidence>
<evidence type="ECO:0000255" key="4">
    <source>
        <dbReference type="PROSITE-ProRule" id="PRU10061"/>
    </source>
</evidence>
<evidence type="ECO:0000269" key="5">
    <source>
    </source>
</evidence>
<evidence type="ECO:0000305" key="6"/>
<evidence type="ECO:0007829" key="7">
    <source>
        <dbReference type="PDB" id="4W8L"/>
    </source>
</evidence>
<evidence type="ECO:0007829" key="8">
    <source>
        <dbReference type="PDB" id="4XUO"/>
    </source>
</evidence>
<evidence type="ECO:0007829" key="9">
    <source>
        <dbReference type="PDB" id="4XUR"/>
    </source>
</evidence>
<reference key="1">
    <citation type="journal article" date="1999" name="Microbiology">
        <title>A multidomain xylanase from a Bacillus sp. with a region homologous to thermostabilizing domains of thermophilic enzymes.</title>
        <authorList>
            <person name="Blanco A."/>
            <person name="Diaz P."/>
            <person name="Zueco J."/>
            <person name="Parascandola P."/>
            <person name="Pastor F.I.J."/>
        </authorList>
    </citation>
    <scope>NUCLEOTIDE SEQUENCE [GENOMIC DNA]</scope>
    <scope>FUNCTION</scope>
    <scope>CATALYTIC ACTIVITY</scope>
    <scope>SUBSTRATE SPECIFICITY</scope>
    <scope>ACTIVITY REGULATION</scope>
    <scope>BIOPHYSICOCHEMICAL PROPERTIES</scope>
    <source>
        <strain>DSM 15478 / BCRC 17560 / CECT 7022 / CIP 108718 / BP-23</strain>
    </source>
</reference>
<proteinExistence type="evidence at protein level"/>
<sequence>MRGKWLRLCLAAVLIVSLLPGLGAGEWKASAAKAGDILLSHSFEEGTTQGWTARGGVKVDVTAEQAYQGKQSLQTTGRTEAWNGPSLSLTDVVHKNEVVEISGYVKLVAGSAPPDLKFTVERRDRNGDTQYDQVNAAEQVTDQKWVKLQGQYSYEQGSSLLLYLESTDAKAAYLLDEFQIRLVKAAPENPGEPGEAGQALFKAYFEDGNIGNWRARGTEKLEVVSGIGHNSNRSLKTSSRSETYHGPLVEVLPYLQKGSTVHISFWAMYDEGPATQVINGSLEKEFNRDTANLEYAMFASTTLNKGQWKKIEADIIVPAESTGISGLRMYAETPWKQSSEVTETDTIPFYVDDVQITATEAIAIEKNIPDLAKKLGSSYALGAAIDQTALDPKDPHSELLTKHFNSITAGNFMKMDAMQPTEGKFVWSEADKLVNFAAANNMQVRGHTLLWHSQVPDWFFTDPNDPSKPATREQLMQRMKTHIQTIVSRYKGKVHTWDVVNEVISDGGGLRNQASGSKWRDIIGDVDGDGDDSDYIELAFRYAREADPDAVLVINDYGIEGSVSKMNDMVKLVEKLLAKGTPIDAIGFQMHVSMYGPDIKQIREAFNRAAALGVHIQVTELDMSIYSGNSEQEKPVTDEMMLEQAYRYRALFDLFKEFDDRGVMDSVTLWGLADDGTWLDDFPVKGRKDAPLLFDRKLKAKPAYWALVDPSTLPVYRNEWTASQAKVSLPDRKGQEDIIWGAVRALPFSHVIEGAVGTTGEVKTLWDGKQLNLRIEVKDATRLKGDQVEVFVSPEDMTAGKKNSTPKDGQYIFNRDGGKGKDQKLYQVKENKSGYVVYASLPLSSADLAAGKVLSLDFRITDKQPNGKTSIVVWNDVNNQQPQKTENRGKLKLGFDLKHAKVMYGTPTVDGKEDKLWKKAVTITTDVKVTGNSGAKAKAKLLWDEKYLYVLAEVKDPLLSKKSANAHEQDSIELFIDLNKNQTNSYEEDDAQYRVNFDNETSFGGSPRKELFKSATRLTKEGYIVEAAIPLENVRTKESKWIGFDLQVNDDGAGDGKRSSVFMWSDPSGNSYRDTSGFGSLLLMKK</sequence>
<feature type="signal peptide" evidence="2">
    <location>
        <begin position="1"/>
        <end position="31"/>
    </location>
</feature>
<feature type="chain" id="PRO_0000371420" description="Endo-1,4-beta-xylanase C">
    <location>
        <begin position="32"/>
        <end position="1086"/>
    </location>
</feature>
<feature type="domain" description="CBM-cenC 1">
    <location>
        <begin position="35"/>
        <end position="183"/>
    </location>
</feature>
<feature type="domain" description="CBM-cenC 2">
    <location>
        <begin position="197"/>
        <end position="359"/>
    </location>
</feature>
<feature type="domain" description="GH10" evidence="3">
    <location>
        <begin position="365"/>
        <end position="710"/>
    </location>
</feature>
<feature type="active site" description="Proton donor" evidence="1">
    <location>
        <position position="502"/>
    </location>
</feature>
<feature type="active site" evidence="1">
    <location>
        <position position="556"/>
    </location>
</feature>
<feature type="active site" description="Nucleophile" evidence="4">
    <location>
        <position position="620"/>
    </location>
</feature>
<feature type="strand" evidence="8">
    <location>
        <begin position="37"/>
        <end position="41"/>
    </location>
</feature>
<feature type="strand" evidence="8">
    <location>
        <begin position="45"/>
        <end position="47"/>
    </location>
</feature>
<feature type="strand" evidence="8">
    <location>
        <begin position="52"/>
        <end position="56"/>
    </location>
</feature>
<feature type="strand" evidence="8">
    <location>
        <begin position="58"/>
        <end position="64"/>
    </location>
</feature>
<feature type="strand" evidence="8">
    <location>
        <begin position="67"/>
        <end position="70"/>
    </location>
</feature>
<feature type="strand" evidence="8">
    <location>
        <begin position="72"/>
        <end position="76"/>
    </location>
</feature>
<feature type="strand" evidence="8">
    <location>
        <begin position="84"/>
        <end position="88"/>
    </location>
</feature>
<feature type="turn" evidence="8">
    <location>
        <begin position="90"/>
        <end position="92"/>
    </location>
</feature>
<feature type="strand" evidence="8">
    <location>
        <begin position="98"/>
        <end position="107"/>
    </location>
</feature>
<feature type="strand" evidence="8">
    <location>
        <begin position="114"/>
        <end position="123"/>
    </location>
</feature>
<feature type="strand" evidence="8">
    <location>
        <begin position="129"/>
        <end position="133"/>
    </location>
</feature>
<feature type="strand" evidence="8">
    <location>
        <begin position="138"/>
        <end position="140"/>
    </location>
</feature>
<feature type="strand" evidence="8">
    <location>
        <begin position="142"/>
        <end position="144"/>
    </location>
</feature>
<feature type="strand" evidence="8">
    <location>
        <begin position="146"/>
        <end position="152"/>
    </location>
</feature>
<feature type="strand" evidence="8">
    <location>
        <begin position="158"/>
        <end position="168"/>
    </location>
</feature>
<feature type="strand" evidence="8">
    <location>
        <begin position="173"/>
        <end position="184"/>
    </location>
</feature>
<feature type="strand" evidence="9">
    <location>
        <begin position="201"/>
        <end position="203"/>
    </location>
</feature>
<feature type="strand" evidence="9">
    <location>
        <begin position="216"/>
        <end position="218"/>
    </location>
</feature>
<feature type="strand" evidence="9">
    <location>
        <begin position="220"/>
        <end position="226"/>
    </location>
</feature>
<feature type="strand" evidence="9">
    <location>
        <begin position="229"/>
        <end position="238"/>
    </location>
</feature>
<feature type="strand" evidence="9">
    <location>
        <begin position="248"/>
        <end position="250"/>
    </location>
</feature>
<feature type="helix" evidence="9">
    <location>
        <begin position="252"/>
        <end position="254"/>
    </location>
</feature>
<feature type="strand" evidence="9">
    <location>
        <begin position="260"/>
        <end position="268"/>
    </location>
</feature>
<feature type="strand" evidence="9">
    <location>
        <begin position="271"/>
        <end position="286"/>
    </location>
</feature>
<feature type="strand" evidence="9">
    <location>
        <begin position="294"/>
        <end position="304"/>
    </location>
</feature>
<feature type="strand" evidence="9">
    <location>
        <begin position="309"/>
        <end position="316"/>
    </location>
</feature>
<feature type="helix" evidence="9">
    <location>
        <begin position="320"/>
        <end position="322"/>
    </location>
</feature>
<feature type="strand" evidence="9">
    <location>
        <begin position="324"/>
        <end position="332"/>
    </location>
</feature>
<feature type="helix" evidence="9">
    <location>
        <begin position="338"/>
        <end position="340"/>
    </location>
</feature>
<feature type="helix" evidence="9">
    <location>
        <begin position="344"/>
        <end position="346"/>
    </location>
</feature>
<feature type="strand" evidence="9">
    <location>
        <begin position="349"/>
        <end position="358"/>
    </location>
</feature>
<feature type="helix" evidence="7">
    <location>
        <begin position="371"/>
        <end position="375"/>
    </location>
</feature>
<feature type="strand" evidence="7">
    <location>
        <begin position="378"/>
        <end position="385"/>
    </location>
</feature>
<feature type="helix" evidence="7">
    <location>
        <begin position="387"/>
        <end position="390"/>
    </location>
</feature>
<feature type="helix" evidence="7">
    <location>
        <begin position="395"/>
        <end position="403"/>
    </location>
</feature>
<feature type="strand" evidence="7">
    <location>
        <begin position="405"/>
        <end position="411"/>
    </location>
</feature>
<feature type="helix" evidence="7">
    <location>
        <begin position="415"/>
        <end position="418"/>
    </location>
</feature>
<feature type="helix" evidence="7">
    <location>
        <begin position="428"/>
        <end position="439"/>
    </location>
</feature>
<feature type="strand" evidence="7">
    <location>
        <begin position="443"/>
        <end position="447"/>
    </location>
</feature>
<feature type="strand" evidence="7">
    <location>
        <begin position="452"/>
        <end position="454"/>
    </location>
</feature>
<feature type="helix" evidence="7">
    <location>
        <begin position="457"/>
        <end position="460"/>
    </location>
</feature>
<feature type="helix" evidence="7">
    <location>
        <begin position="472"/>
        <end position="490"/>
    </location>
</feature>
<feature type="turn" evidence="7">
    <location>
        <begin position="491"/>
        <end position="493"/>
    </location>
</feature>
<feature type="strand" evidence="7">
    <location>
        <begin position="496"/>
        <end position="501"/>
    </location>
</feature>
<feature type="strand" evidence="7">
    <location>
        <begin position="508"/>
        <end position="510"/>
    </location>
</feature>
<feature type="helix" evidence="7">
    <location>
        <begin position="513"/>
        <end position="515"/>
    </location>
</feature>
<feature type="helix" evidence="7">
    <location>
        <begin position="519"/>
        <end position="523"/>
    </location>
</feature>
<feature type="helix" evidence="7">
    <location>
        <begin position="534"/>
        <end position="546"/>
    </location>
</feature>
<feature type="strand" evidence="7">
    <location>
        <begin position="551"/>
        <end position="558"/>
    </location>
</feature>
<feature type="turn" evidence="7">
    <location>
        <begin position="559"/>
        <end position="561"/>
    </location>
</feature>
<feature type="helix" evidence="7">
    <location>
        <begin position="563"/>
        <end position="578"/>
    </location>
</feature>
<feature type="strand" evidence="7">
    <location>
        <begin position="585"/>
        <end position="588"/>
    </location>
</feature>
<feature type="strand" evidence="7">
    <location>
        <begin position="591"/>
        <end position="593"/>
    </location>
</feature>
<feature type="helix" evidence="7">
    <location>
        <begin position="599"/>
        <end position="610"/>
    </location>
</feature>
<feature type="turn" evidence="7">
    <location>
        <begin position="611"/>
        <end position="613"/>
    </location>
</feature>
<feature type="strand" evidence="7">
    <location>
        <begin position="615"/>
        <end position="631"/>
    </location>
</feature>
<feature type="helix" evidence="7">
    <location>
        <begin position="638"/>
        <end position="659"/>
    </location>
</feature>
<feature type="turn" evidence="7">
    <location>
        <begin position="660"/>
        <end position="662"/>
    </location>
</feature>
<feature type="strand" evidence="7">
    <location>
        <begin position="664"/>
        <end position="670"/>
    </location>
</feature>
<feature type="helix" evidence="7">
    <location>
        <begin position="674"/>
        <end position="676"/>
    </location>
</feature>
<feature type="helix" evidence="7">
    <location>
        <begin position="678"/>
        <end position="680"/>
    </location>
</feature>
<feature type="strand" evidence="7">
    <location>
        <begin position="682"/>
        <end position="684"/>
    </location>
</feature>
<feature type="strand" evidence="7">
    <location>
        <begin position="692"/>
        <end position="694"/>
    </location>
</feature>
<feature type="helix" evidence="7">
    <location>
        <begin position="702"/>
        <end position="708"/>
    </location>
</feature>
<feature type="helix" evidence="7">
    <location>
        <begin position="710"/>
        <end position="712"/>
    </location>
</feature>
<keyword id="KW-0002">3D-structure</keyword>
<keyword id="KW-0119">Carbohydrate metabolism</keyword>
<keyword id="KW-0326">Glycosidase</keyword>
<keyword id="KW-0378">Hydrolase</keyword>
<keyword id="KW-0624">Polysaccharide degradation</keyword>
<keyword id="KW-0677">Repeat</keyword>
<keyword id="KW-0732">Signal</keyword>
<keyword id="KW-0858">Xylan degradation</keyword>
<comment type="function">
    <text evidence="5">Endoxylanase with high hydrolytic activity on birchwood and oat spelt xylan. Xylotetraose, xylotriose, xylobiose and xylose are the main products from birchwood xylan hydrolysis. Shows increasing activity on xylo-oligosaccharides of increasing length. Displays very low hydrolytic activity on Avicel, carboxymethylcellulose (CMC) and p-nitrophenyl-beta-xylopyranoside. Also shows transxylosidase activity, allowing the formation of xylo-oligosaccharides of higher degree of polymerization than the starting substrate.</text>
</comment>
<comment type="catalytic activity">
    <reaction evidence="5">
        <text>Endohydrolysis of (1-&gt;4)-beta-D-xylosidic linkages in xylans.</text>
        <dbReference type="EC" id="3.2.1.8"/>
    </reaction>
</comment>
<comment type="biophysicochemical properties">
    <phDependence>
        <text evidence="5">Optimum pH is 5. Retains at least 50% of its maximum activity between pH 4.5 and 8.0. Is not active at pH values below 4.5, while at least 35% of maximum activity is found in the pH range 8.5-11.0.</text>
    </phDependence>
    <temperatureDependence>
        <text evidence="5">Optimum temperature is 45 degrees Celsius. Is only stable at 55 degrees Celsius or lower temperatures. Retains more than 77% activity after 2 hours incubation at 55 degrees Celsius and pH 7.</text>
    </temperatureDependence>
</comment>
<comment type="pathway">
    <text>Glycan degradation; xylan degradation.</text>
</comment>
<comment type="domain">
    <text>Consists of three different domains. The central region of the enzyme is the catalytic domain. The N-terminal region contains cenC-type cellulose-binding domains and seems to act as a thermostabilizing domain: a derivative lacking this region shows a lower optimum temperature for activity (35 degrees Celsius) than the full-length enzyme, and a reduced thermal stability that results in a complete inactivation of the enzyme after 2 hours incubation at 55 degrees Celsius. The C-terminal region contains family 9 carbohydrate-binding modules.</text>
</comment>
<comment type="similarity">
    <text evidence="6">Belongs to the glycosyl hydrolase 10 (cellulase F) family.</text>
</comment>
<name>XYNC_PAEBA</name>
<gene>
    <name type="primary">xynC</name>
</gene>
<accession>O69230</accession>
<protein>
    <recommendedName>
        <fullName>Endo-1,4-beta-xylanase C</fullName>
        <shortName>Xylanase C</shortName>
        <ecNumber>3.2.1.8</ecNumber>
    </recommendedName>
    <alternativeName>
        <fullName>1,4-beta-D-xylan xylanohydrolase C</fullName>
    </alternativeName>
</protein>
<dbReference type="EC" id="3.2.1.8"/>
<dbReference type="EMBL" id="AJ006645">
    <property type="protein sequence ID" value="CAA07173.1"/>
    <property type="molecule type" value="Genomic_DNA"/>
</dbReference>
<dbReference type="PIR" id="T17628">
    <property type="entry name" value="T17628"/>
</dbReference>
<dbReference type="PDB" id="4W8L">
    <property type="method" value="X-ray"/>
    <property type="resolution" value="1.76 A"/>
    <property type="chains" value="A/B/C=367-718"/>
</dbReference>
<dbReference type="PDB" id="4XUN">
    <property type="method" value="X-ray"/>
    <property type="resolution" value="1.75 A"/>
    <property type="chains" value="A/B/C=186-366"/>
</dbReference>
<dbReference type="PDB" id="4XUO">
    <property type="method" value="X-ray"/>
    <property type="resolution" value="1.70 A"/>
    <property type="chains" value="A/B=29-186"/>
</dbReference>
<dbReference type="PDB" id="4XUP">
    <property type="method" value="X-ray"/>
    <property type="resolution" value="2.43 A"/>
    <property type="chains" value="A/B/C/D/E/F=28-361"/>
</dbReference>
<dbReference type="PDB" id="4XUQ">
    <property type="method" value="X-ray"/>
    <property type="resolution" value="1.95 A"/>
    <property type="chains" value="A/B/C=186-366"/>
</dbReference>
<dbReference type="PDB" id="4XUR">
    <property type="method" value="X-ray"/>
    <property type="resolution" value="1.67 A"/>
    <property type="chains" value="A/B/C=186-366"/>
</dbReference>
<dbReference type="PDB" id="4XUT">
    <property type="method" value="X-ray"/>
    <property type="resolution" value="1.80 A"/>
    <property type="chains" value="A/B/C=186-366"/>
</dbReference>
<dbReference type="PDBsum" id="4W8L"/>
<dbReference type="PDBsum" id="4XUN"/>
<dbReference type="PDBsum" id="4XUO"/>
<dbReference type="PDBsum" id="4XUP"/>
<dbReference type="PDBsum" id="4XUQ"/>
<dbReference type="PDBsum" id="4XUR"/>
<dbReference type="PDBsum" id="4XUT"/>
<dbReference type="SMR" id="O69230"/>
<dbReference type="CAZy" id="CBM22">
    <property type="family name" value="Carbohydrate-Binding Module Family 22"/>
</dbReference>
<dbReference type="CAZy" id="CBM9">
    <property type="family name" value="Carbohydrate-Binding Module Family 9"/>
</dbReference>
<dbReference type="CAZy" id="GH10">
    <property type="family name" value="Glycoside Hydrolase Family 10"/>
</dbReference>
<dbReference type="UniPathway" id="UPA00114"/>
<dbReference type="EvolutionaryTrace" id="O69230"/>
<dbReference type="GO" id="GO:0030246">
    <property type="term" value="F:carbohydrate binding"/>
    <property type="evidence" value="ECO:0007669"/>
    <property type="project" value="InterPro"/>
</dbReference>
<dbReference type="GO" id="GO:0031176">
    <property type="term" value="F:endo-1,4-beta-xylanase activity"/>
    <property type="evidence" value="ECO:0007669"/>
    <property type="project" value="UniProtKB-EC"/>
</dbReference>
<dbReference type="GO" id="GO:0045493">
    <property type="term" value="P:xylan catabolic process"/>
    <property type="evidence" value="ECO:0007669"/>
    <property type="project" value="UniProtKB-UniPathway"/>
</dbReference>
<dbReference type="CDD" id="cd00005">
    <property type="entry name" value="CBM9_like_1"/>
    <property type="match status" value="1"/>
</dbReference>
<dbReference type="CDD" id="cd00241">
    <property type="entry name" value="DOMON_like"/>
    <property type="match status" value="1"/>
</dbReference>
<dbReference type="Gene3D" id="2.60.40.1190">
    <property type="match status" value="2"/>
</dbReference>
<dbReference type="Gene3D" id="2.60.120.260">
    <property type="entry name" value="Galactose-binding domain-like"/>
    <property type="match status" value="2"/>
</dbReference>
<dbReference type="Gene3D" id="3.20.20.80">
    <property type="entry name" value="Glycosidases"/>
    <property type="match status" value="1"/>
</dbReference>
<dbReference type="InterPro" id="IPR010502">
    <property type="entry name" value="Carb-bd_dom_fam9"/>
</dbReference>
<dbReference type="InterPro" id="IPR003305">
    <property type="entry name" value="CenC_carb-bd"/>
</dbReference>
<dbReference type="InterPro" id="IPR008979">
    <property type="entry name" value="Galactose-bd-like_sf"/>
</dbReference>
<dbReference type="InterPro" id="IPR044846">
    <property type="entry name" value="GH10"/>
</dbReference>
<dbReference type="InterPro" id="IPR031158">
    <property type="entry name" value="GH10_AS"/>
</dbReference>
<dbReference type="InterPro" id="IPR001000">
    <property type="entry name" value="GH10_dom"/>
</dbReference>
<dbReference type="InterPro" id="IPR017853">
    <property type="entry name" value="Glycoside_hydrolase_SF"/>
</dbReference>
<dbReference type="PANTHER" id="PTHR31490:SF88">
    <property type="entry name" value="BETA-XYLANASE"/>
    <property type="match status" value="1"/>
</dbReference>
<dbReference type="PANTHER" id="PTHR31490">
    <property type="entry name" value="GLYCOSYL HYDROLASE"/>
    <property type="match status" value="1"/>
</dbReference>
<dbReference type="Pfam" id="PF06452">
    <property type="entry name" value="CBM9_1"/>
    <property type="match status" value="2"/>
</dbReference>
<dbReference type="Pfam" id="PF02018">
    <property type="entry name" value="CBM_4_9"/>
    <property type="match status" value="2"/>
</dbReference>
<dbReference type="Pfam" id="PF00331">
    <property type="entry name" value="Glyco_hydro_10"/>
    <property type="match status" value="1"/>
</dbReference>
<dbReference type="PRINTS" id="PR00134">
    <property type="entry name" value="GLHYDRLASE10"/>
</dbReference>
<dbReference type="SMART" id="SM00633">
    <property type="entry name" value="Glyco_10"/>
    <property type="match status" value="1"/>
</dbReference>
<dbReference type="SUPFAM" id="SSF51445">
    <property type="entry name" value="(Trans)glycosidases"/>
    <property type="match status" value="1"/>
</dbReference>
<dbReference type="SUPFAM" id="SSF49344">
    <property type="entry name" value="CBD9-like"/>
    <property type="match status" value="2"/>
</dbReference>
<dbReference type="SUPFAM" id="SSF49785">
    <property type="entry name" value="Galactose-binding domain-like"/>
    <property type="match status" value="2"/>
</dbReference>
<dbReference type="PROSITE" id="PS00591">
    <property type="entry name" value="GH10_1"/>
    <property type="match status" value="1"/>
</dbReference>
<dbReference type="PROSITE" id="PS51760">
    <property type="entry name" value="GH10_2"/>
    <property type="match status" value="1"/>
</dbReference>
<organism>
    <name type="scientific">Paenibacillus barcinonensis</name>
    <dbReference type="NCBI Taxonomy" id="198119"/>
    <lineage>
        <taxon>Bacteria</taxon>
        <taxon>Bacillati</taxon>
        <taxon>Bacillota</taxon>
        <taxon>Bacilli</taxon>
        <taxon>Bacillales</taxon>
        <taxon>Paenibacillaceae</taxon>
        <taxon>Paenibacillus</taxon>
    </lineage>
</organism>